<gene>
    <name evidence="1" type="primary">obg</name>
    <name type="ordered locus">Tpet_0826</name>
</gene>
<reference key="1">
    <citation type="submission" date="2007-05" db="EMBL/GenBank/DDBJ databases">
        <title>Complete sequence of Thermotoga petrophila RKU-1.</title>
        <authorList>
            <consortium name="US DOE Joint Genome Institute"/>
            <person name="Copeland A."/>
            <person name="Lucas S."/>
            <person name="Lapidus A."/>
            <person name="Barry K."/>
            <person name="Glavina del Rio T."/>
            <person name="Dalin E."/>
            <person name="Tice H."/>
            <person name="Pitluck S."/>
            <person name="Sims D."/>
            <person name="Brettin T."/>
            <person name="Bruce D."/>
            <person name="Detter J.C."/>
            <person name="Han C."/>
            <person name="Tapia R."/>
            <person name="Schmutz J."/>
            <person name="Larimer F."/>
            <person name="Land M."/>
            <person name="Hauser L."/>
            <person name="Kyrpides N."/>
            <person name="Mikhailova N."/>
            <person name="Nelson K."/>
            <person name="Gogarten J.P."/>
            <person name="Noll K."/>
            <person name="Richardson P."/>
        </authorList>
    </citation>
    <scope>NUCLEOTIDE SEQUENCE [LARGE SCALE GENOMIC DNA]</scope>
    <source>
        <strain>ATCC BAA-488 / DSM 13995 / JCM 10881 / RKU-1</strain>
    </source>
</reference>
<name>OBG_THEP1</name>
<accession>A5IKX2</accession>
<feature type="chain" id="PRO_0000386358" description="GTPase Obg">
    <location>
        <begin position="1"/>
        <end position="435"/>
    </location>
</feature>
<feature type="domain" description="Obg" evidence="3">
    <location>
        <begin position="6"/>
        <end position="164"/>
    </location>
</feature>
<feature type="domain" description="OBG-type G" evidence="1">
    <location>
        <begin position="165"/>
        <end position="335"/>
    </location>
</feature>
<feature type="domain" description="OCT" evidence="2">
    <location>
        <begin position="357"/>
        <end position="435"/>
    </location>
</feature>
<feature type="binding site" evidence="1">
    <location>
        <begin position="171"/>
        <end position="178"/>
    </location>
    <ligand>
        <name>GTP</name>
        <dbReference type="ChEBI" id="CHEBI:37565"/>
    </ligand>
</feature>
<feature type="binding site" evidence="1">
    <location>
        <position position="178"/>
    </location>
    <ligand>
        <name>Mg(2+)</name>
        <dbReference type="ChEBI" id="CHEBI:18420"/>
    </ligand>
</feature>
<feature type="binding site" evidence="1">
    <location>
        <begin position="196"/>
        <end position="200"/>
    </location>
    <ligand>
        <name>GTP</name>
        <dbReference type="ChEBI" id="CHEBI:37565"/>
    </ligand>
</feature>
<feature type="binding site" evidence="1">
    <location>
        <position position="198"/>
    </location>
    <ligand>
        <name>Mg(2+)</name>
        <dbReference type="ChEBI" id="CHEBI:18420"/>
    </ligand>
</feature>
<feature type="binding site" evidence="1">
    <location>
        <begin position="217"/>
        <end position="220"/>
    </location>
    <ligand>
        <name>GTP</name>
        <dbReference type="ChEBI" id="CHEBI:37565"/>
    </ligand>
</feature>
<feature type="binding site" evidence="1">
    <location>
        <begin position="287"/>
        <end position="290"/>
    </location>
    <ligand>
        <name>GTP</name>
        <dbReference type="ChEBI" id="CHEBI:37565"/>
    </ligand>
</feature>
<feature type="binding site" evidence="1">
    <location>
        <begin position="316"/>
        <end position="318"/>
    </location>
    <ligand>
        <name>GTP</name>
        <dbReference type="ChEBI" id="CHEBI:37565"/>
    </ligand>
</feature>
<sequence length="435" mass="48567">MNIERADFVDRVKIFVKAGDGGNGCVSFRREKYVPKGGPDGGDGGDGGFVFLRANPSVSTLIEFVNKRKFVAENGKHGMGKKMKGRNGKDLFIDVPVGTVVKDAVTGEIIADLNEPGKIVCVARGGKGGRGNAHFATSTKQAPLIAERGEKGESRWLELELKILADVGLVGYPNVGKSSLISRISNARPKIANYPFTTLIPNLGVVKYDDFSFVVADIPGLIEGASEGVGLGNVFLRHVERCYLIAHVIDVSGYEREDPVRDYFVIREEMKKYSPFLLEKPEIVVANKIDLIGKEELEKILKRLRDATDREVIPVSAVTGEGIDLLVSKLASIVREMKVEKPERKEERFVKPSPVWRRLPEKFHLEVVKEDEGYWVVEGENLRVWIERFDLNQRDARLMLLQVLEKNGLNNKLKEAGVKEGDVVRIGDFEFEYRE</sequence>
<comment type="function">
    <text evidence="1">An essential GTPase which binds GTP, GDP and possibly (p)ppGpp with moderate affinity, with high nucleotide exchange rates and a fairly low GTP hydrolysis rate. Plays a role in control of the cell cycle, stress response, ribosome biogenesis and in those bacteria that undergo differentiation, in morphogenesis control.</text>
</comment>
<comment type="cofactor">
    <cofactor evidence="1">
        <name>Mg(2+)</name>
        <dbReference type="ChEBI" id="CHEBI:18420"/>
    </cofactor>
</comment>
<comment type="subunit">
    <text evidence="1">Monomer.</text>
</comment>
<comment type="subcellular location">
    <subcellularLocation>
        <location evidence="1">Cytoplasm</location>
    </subcellularLocation>
</comment>
<comment type="similarity">
    <text evidence="1">Belongs to the TRAFAC class OBG-HflX-like GTPase superfamily. OBG GTPase family.</text>
</comment>
<dbReference type="EC" id="3.6.5.-" evidence="1"/>
<dbReference type="EMBL" id="CP000702">
    <property type="protein sequence ID" value="ABQ46845.1"/>
    <property type="molecule type" value="Genomic_DNA"/>
</dbReference>
<dbReference type="RefSeq" id="WP_011943412.1">
    <property type="nucleotide sequence ID" value="NC_009486.1"/>
</dbReference>
<dbReference type="SMR" id="A5IKX2"/>
<dbReference type="STRING" id="390874.Tpet_0826"/>
<dbReference type="KEGG" id="tpt:Tpet_0826"/>
<dbReference type="eggNOG" id="COG0536">
    <property type="taxonomic scope" value="Bacteria"/>
</dbReference>
<dbReference type="HOGENOM" id="CLU_011747_2_1_0"/>
<dbReference type="Proteomes" id="UP000006558">
    <property type="component" value="Chromosome"/>
</dbReference>
<dbReference type="GO" id="GO:0005737">
    <property type="term" value="C:cytoplasm"/>
    <property type="evidence" value="ECO:0007669"/>
    <property type="project" value="UniProtKB-SubCell"/>
</dbReference>
<dbReference type="GO" id="GO:0005525">
    <property type="term" value="F:GTP binding"/>
    <property type="evidence" value="ECO:0007669"/>
    <property type="project" value="UniProtKB-UniRule"/>
</dbReference>
<dbReference type="GO" id="GO:0003924">
    <property type="term" value="F:GTPase activity"/>
    <property type="evidence" value="ECO:0007669"/>
    <property type="project" value="UniProtKB-UniRule"/>
</dbReference>
<dbReference type="GO" id="GO:0000287">
    <property type="term" value="F:magnesium ion binding"/>
    <property type="evidence" value="ECO:0007669"/>
    <property type="project" value="InterPro"/>
</dbReference>
<dbReference type="GO" id="GO:0042254">
    <property type="term" value="P:ribosome biogenesis"/>
    <property type="evidence" value="ECO:0007669"/>
    <property type="project" value="UniProtKB-UniRule"/>
</dbReference>
<dbReference type="CDD" id="cd01898">
    <property type="entry name" value="Obg"/>
    <property type="match status" value="1"/>
</dbReference>
<dbReference type="FunFam" id="2.70.210.12:FF:000001">
    <property type="entry name" value="GTPase Obg"/>
    <property type="match status" value="1"/>
</dbReference>
<dbReference type="Gene3D" id="3.30.300.350">
    <property type="entry name" value="GTP-binding protein OBG, C-terminal domain"/>
    <property type="match status" value="1"/>
</dbReference>
<dbReference type="Gene3D" id="2.70.210.12">
    <property type="entry name" value="GTP1/OBG domain"/>
    <property type="match status" value="1"/>
</dbReference>
<dbReference type="Gene3D" id="3.40.50.300">
    <property type="entry name" value="P-loop containing nucleotide triphosphate hydrolases"/>
    <property type="match status" value="1"/>
</dbReference>
<dbReference type="HAMAP" id="MF_01454">
    <property type="entry name" value="GTPase_Obg"/>
    <property type="match status" value="1"/>
</dbReference>
<dbReference type="InterPro" id="IPR031167">
    <property type="entry name" value="G_OBG"/>
</dbReference>
<dbReference type="InterPro" id="IPR006073">
    <property type="entry name" value="GTP-bd"/>
</dbReference>
<dbReference type="InterPro" id="IPR014100">
    <property type="entry name" value="GTP-bd_Obg/CgtA"/>
</dbReference>
<dbReference type="InterPro" id="IPR036346">
    <property type="entry name" value="GTP-bd_prot_GTP1/OBG_C_sf"/>
</dbReference>
<dbReference type="InterPro" id="IPR006074">
    <property type="entry name" value="GTP1-OBG_CS"/>
</dbReference>
<dbReference type="InterPro" id="IPR006169">
    <property type="entry name" value="GTP1_OBG_dom"/>
</dbReference>
<dbReference type="InterPro" id="IPR036726">
    <property type="entry name" value="GTP1_OBG_dom_sf"/>
</dbReference>
<dbReference type="InterPro" id="IPR045086">
    <property type="entry name" value="OBG_GTPase"/>
</dbReference>
<dbReference type="InterPro" id="IPR015349">
    <property type="entry name" value="OCT_dom"/>
</dbReference>
<dbReference type="InterPro" id="IPR027417">
    <property type="entry name" value="P-loop_NTPase"/>
</dbReference>
<dbReference type="InterPro" id="IPR005225">
    <property type="entry name" value="Small_GTP-bd"/>
</dbReference>
<dbReference type="NCBIfam" id="TIGR02729">
    <property type="entry name" value="Obg_CgtA"/>
    <property type="match status" value="1"/>
</dbReference>
<dbReference type="NCBIfam" id="TIGR03595">
    <property type="entry name" value="Obg_CgtA_exten"/>
    <property type="match status" value="1"/>
</dbReference>
<dbReference type="NCBIfam" id="NF008954">
    <property type="entry name" value="PRK12296.1"/>
    <property type="match status" value="1"/>
</dbReference>
<dbReference type="NCBIfam" id="NF008955">
    <property type="entry name" value="PRK12297.1"/>
    <property type="match status" value="1"/>
</dbReference>
<dbReference type="NCBIfam" id="NF008956">
    <property type="entry name" value="PRK12299.1"/>
    <property type="match status" value="1"/>
</dbReference>
<dbReference type="NCBIfam" id="TIGR00231">
    <property type="entry name" value="small_GTP"/>
    <property type="match status" value="1"/>
</dbReference>
<dbReference type="PANTHER" id="PTHR11702">
    <property type="entry name" value="DEVELOPMENTALLY REGULATED GTP-BINDING PROTEIN-RELATED"/>
    <property type="match status" value="1"/>
</dbReference>
<dbReference type="PANTHER" id="PTHR11702:SF31">
    <property type="entry name" value="MITOCHONDRIAL RIBOSOME-ASSOCIATED GTPASE 2"/>
    <property type="match status" value="1"/>
</dbReference>
<dbReference type="Pfam" id="PF09269">
    <property type="entry name" value="DUF1967"/>
    <property type="match status" value="1"/>
</dbReference>
<dbReference type="Pfam" id="PF01018">
    <property type="entry name" value="GTP1_OBG"/>
    <property type="match status" value="1"/>
</dbReference>
<dbReference type="Pfam" id="PF01926">
    <property type="entry name" value="MMR_HSR1"/>
    <property type="match status" value="1"/>
</dbReference>
<dbReference type="PIRSF" id="PIRSF002401">
    <property type="entry name" value="GTP_bd_Obg/CgtA"/>
    <property type="match status" value="1"/>
</dbReference>
<dbReference type="PRINTS" id="PR00326">
    <property type="entry name" value="GTP1OBG"/>
</dbReference>
<dbReference type="SUPFAM" id="SSF102741">
    <property type="entry name" value="Obg GTP-binding protein C-terminal domain"/>
    <property type="match status" value="1"/>
</dbReference>
<dbReference type="SUPFAM" id="SSF82051">
    <property type="entry name" value="Obg GTP-binding protein N-terminal domain"/>
    <property type="match status" value="1"/>
</dbReference>
<dbReference type="SUPFAM" id="SSF52540">
    <property type="entry name" value="P-loop containing nucleoside triphosphate hydrolases"/>
    <property type="match status" value="1"/>
</dbReference>
<dbReference type="PROSITE" id="PS51710">
    <property type="entry name" value="G_OBG"/>
    <property type="match status" value="1"/>
</dbReference>
<dbReference type="PROSITE" id="PS00905">
    <property type="entry name" value="GTP1_OBG"/>
    <property type="match status" value="1"/>
</dbReference>
<dbReference type="PROSITE" id="PS51883">
    <property type="entry name" value="OBG"/>
    <property type="match status" value="1"/>
</dbReference>
<dbReference type="PROSITE" id="PS51881">
    <property type="entry name" value="OCT"/>
    <property type="match status" value="1"/>
</dbReference>
<protein>
    <recommendedName>
        <fullName evidence="1">GTPase Obg</fullName>
        <ecNumber evidence="1">3.6.5.-</ecNumber>
    </recommendedName>
    <alternativeName>
        <fullName evidence="1">GTP-binding protein Obg</fullName>
    </alternativeName>
</protein>
<keyword id="KW-0963">Cytoplasm</keyword>
<keyword id="KW-0342">GTP-binding</keyword>
<keyword id="KW-0378">Hydrolase</keyword>
<keyword id="KW-0460">Magnesium</keyword>
<keyword id="KW-0479">Metal-binding</keyword>
<keyword id="KW-0547">Nucleotide-binding</keyword>
<evidence type="ECO:0000255" key="1">
    <source>
        <dbReference type="HAMAP-Rule" id="MF_01454"/>
    </source>
</evidence>
<evidence type="ECO:0000255" key="2">
    <source>
        <dbReference type="PROSITE-ProRule" id="PRU01229"/>
    </source>
</evidence>
<evidence type="ECO:0000255" key="3">
    <source>
        <dbReference type="PROSITE-ProRule" id="PRU01231"/>
    </source>
</evidence>
<organism>
    <name type="scientific">Thermotoga petrophila (strain ATCC BAA-488 / DSM 13995 / JCM 10881 / RKU-1)</name>
    <dbReference type="NCBI Taxonomy" id="390874"/>
    <lineage>
        <taxon>Bacteria</taxon>
        <taxon>Thermotogati</taxon>
        <taxon>Thermotogota</taxon>
        <taxon>Thermotogae</taxon>
        <taxon>Thermotogales</taxon>
        <taxon>Thermotogaceae</taxon>
        <taxon>Thermotoga</taxon>
    </lineage>
</organism>
<proteinExistence type="inferred from homology"/>